<evidence type="ECO:0000250" key="1"/>
<evidence type="ECO:0000255" key="2"/>
<evidence type="ECO:0000256" key="3">
    <source>
        <dbReference type="SAM" id="MobiDB-lite"/>
    </source>
</evidence>
<evidence type="ECO:0000269" key="4">
    <source>
    </source>
</evidence>
<evidence type="ECO:0000305" key="5"/>
<proteinExistence type="evidence at transcript level"/>
<feature type="chain" id="PRO_0000189673" description="Carbohydrate sulfotransferase 14">
    <location>
        <begin position="1"/>
        <end position="376"/>
    </location>
</feature>
<feature type="topological domain" description="Cytoplasmic" evidence="2">
    <location>
        <begin position="1"/>
        <end position="39"/>
    </location>
</feature>
<feature type="transmembrane region" description="Helical; Signal-anchor for type II membrane protein" evidence="2">
    <location>
        <begin position="40"/>
        <end position="60"/>
    </location>
</feature>
<feature type="topological domain" description="Lumenal" evidence="2">
    <location>
        <begin position="61"/>
        <end position="376"/>
    </location>
</feature>
<feature type="region of interest" description="Disordered" evidence="3">
    <location>
        <begin position="1"/>
        <end position="30"/>
    </location>
</feature>
<feature type="region of interest" description="Disordered" evidence="3">
    <location>
        <begin position="76"/>
        <end position="96"/>
    </location>
</feature>
<feature type="compositionally biased region" description="Low complexity" evidence="3">
    <location>
        <begin position="18"/>
        <end position="30"/>
    </location>
</feature>
<feature type="binding site" evidence="1">
    <location>
        <begin position="155"/>
        <end position="161"/>
    </location>
    <ligand>
        <name>3'-phosphoadenylyl sulfate</name>
        <dbReference type="ChEBI" id="CHEBI:58339"/>
    </ligand>
</feature>
<feature type="binding site" evidence="1">
    <location>
        <begin position="213"/>
        <end position="221"/>
    </location>
    <ligand>
        <name>3'-phosphoadenylyl sulfate</name>
        <dbReference type="ChEBI" id="CHEBI:58339"/>
    </ligand>
</feature>
<feature type="glycosylation site" description="N-linked (GlcNAc...) asparagine" evidence="2">
    <location>
        <position position="110"/>
    </location>
</feature>
<feature type="glycosylation site" description="N-linked (GlcNAc...) asparagine" evidence="2">
    <location>
        <position position="368"/>
    </location>
</feature>
<feature type="sequence conflict" description="In Ref. 4; AAH43700/AAH26886." evidence="5" ref="4">
    <original>I</original>
    <variation>V</variation>
    <location>
        <position position="172"/>
    </location>
</feature>
<feature type="sequence conflict" description="In Ref. 4; AAH43700." evidence="5" ref="4">
    <original>R</original>
    <variation>P</variation>
    <location>
        <position position="185"/>
    </location>
</feature>
<keyword id="KW-0119">Carbohydrate metabolism</keyword>
<keyword id="KW-0325">Glycoprotein</keyword>
<keyword id="KW-0333">Golgi apparatus</keyword>
<keyword id="KW-0472">Membrane</keyword>
<keyword id="KW-1185">Reference proteome</keyword>
<keyword id="KW-0735">Signal-anchor</keyword>
<keyword id="KW-0808">Transferase</keyword>
<keyword id="KW-0812">Transmembrane</keyword>
<keyword id="KW-1133">Transmembrane helix</keyword>
<organism>
    <name type="scientific">Mus musculus</name>
    <name type="common">Mouse</name>
    <dbReference type="NCBI Taxonomy" id="10090"/>
    <lineage>
        <taxon>Eukaryota</taxon>
        <taxon>Metazoa</taxon>
        <taxon>Chordata</taxon>
        <taxon>Craniata</taxon>
        <taxon>Vertebrata</taxon>
        <taxon>Euteleostomi</taxon>
        <taxon>Mammalia</taxon>
        <taxon>Eutheria</taxon>
        <taxon>Euarchontoglires</taxon>
        <taxon>Glires</taxon>
        <taxon>Rodentia</taxon>
        <taxon>Myomorpha</taxon>
        <taxon>Muroidea</taxon>
        <taxon>Muridae</taxon>
        <taxon>Murinae</taxon>
        <taxon>Mus</taxon>
        <taxon>Mus</taxon>
    </lineage>
</organism>
<comment type="function">
    <text evidence="4">Catalyzes the transfer of sulfate to position 4 of the N-acetylgalactosamine (GalNAc) residue of dermatan sulfate. Plays a pivotal role in the formation of 4-0-sulfated IdoA blocks in dermatan sulfate. Transfers sulfate to the C-4 hydroxyl of beta1,4-linked GalNAc that is substituted with an alpha-linked iduronic acid (IdoUA) at the C-3 hydroxyl. Transfers sulfate more efficiently to GalNAc residues in -IdoUA-GalNAc-IdoUA- than in -GlcUA-GalNAc-GlcUA-sequences. Has preference for partially desulfated dermatan sulfate. Addition of sulfate to GalNAc may occur immediately after epimerization of GlcUA to IdoUA. Appears to have an important role in the formation of the cerebellar neural network during postnatal brain development.</text>
</comment>
<comment type="catalytic activity">
    <reaction evidence="4">
        <text>dermatan + n 3'-phosphoadenylyl sulfate = dermatan 4'-sulfate + n adenosine 3',5'-bisphosphate + n H(+)</text>
        <dbReference type="Rhea" id="RHEA:48052"/>
        <dbReference type="Rhea" id="RHEA-COMP:9965"/>
        <dbReference type="Rhea" id="RHEA-COMP:11986"/>
        <dbReference type="ChEBI" id="CHEBI:15378"/>
        <dbReference type="ChEBI" id="CHEBI:58339"/>
        <dbReference type="ChEBI" id="CHEBI:58343"/>
        <dbReference type="ChEBI" id="CHEBI:58465"/>
        <dbReference type="ChEBI" id="CHEBI:60059"/>
        <dbReference type="EC" id="2.8.2.35"/>
    </reaction>
</comment>
<comment type="subcellular location">
    <subcellularLocation>
        <location evidence="1">Golgi apparatus membrane</location>
        <topology evidence="1">Single-pass type II membrane protein</topology>
    </subcellularLocation>
</comment>
<comment type="developmental stage">
    <text evidence="4">Low levels of expression in olfactory bulb, caudate putamen, cerebral cortex, hippocampus, thalamus, midbrain and cerebellum during early postnatal development. In later stages, exclusively expressed in cerebellum culminating at P14 of postnatal development.</text>
</comment>
<comment type="similarity">
    <text evidence="5">Belongs to the sulfotransferase 2 family.</text>
</comment>
<accession>Q80V53</accession>
<accession>A2AQV3</accession>
<accession>Q3TXA1</accession>
<accession>Q8R304</accession>
<accession>Q9D0P2</accession>
<dbReference type="EC" id="2.8.2.35"/>
<dbReference type="EMBL" id="AK011230">
    <property type="protein sequence ID" value="BAB27480.1"/>
    <property type="molecule type" value="mRNA"/>
</dbReference>
<dbReference type="EMBL" id="AK154636">
    <property type="protein sequence ID" value="BAE32731.1"/>
    <property type="molecule type" value="mRNA"/>
</dbReference>
<dbReference type="EMBL" id="AK159357">
    <property type="protein sequence ID" value="BAE35015.1"/>
    <property type="molecule type" value="mRNA"/>
</dbReference>
<dbReference type="EMBL" id="AK171614">
    <property type="protein sequence ID" value="BAE42565.1"/>
    <property type="molecule type" value="mRNA"/>
</dbReference>
<dbReference type="EMBL" id="AL845164">
    <property type="status" value="NOT_ANNOTATED_CDS"/>
    <property type="molecule type" value="Genomic_DNA"/>
</dbReference>
<dbReference type="EMBL" id="BC026886">
    <property type="protein sequence ID" value="AAH26886.1"/>
    <property type="molecule type" value="mRNA"/>
</dbReference>
<dbReference type="EMBL" id="BC043700">
    <property type="protein sequence ID" value="AAH43700.1"/>
    <property type="molecule type" value="mRNA"/>
</dbReference>
<dbReference type="EMBL" id="BC085479">
    <property type="protein sequence ID" value="AAH85479.1"/>
    <property type="molecule type" value="mRNA"/>
</dbReference>
<dbReference type="CCDS" id="CCDS16587.1"/>
<dbReference type="RefSeq" id="NP_082393.3">
    <property type="nucleotide sequence ID" value="NM_028117.3"/>
</dbReference>
<dbReference type="SMR" id="Q80V53"/>
<dbReference type="FunCoup" id="Q80V53">
    <property type="interactions" value="145"/>
</dbReference>
<dbReference type="IntAct" id="Q80V53">
    <property type="interactions" value="1"/>
</dbReference>
<dbReference type="MINT" id="Q80V53"/>
<dbReference type="STRING" id="10090.ENSMUSP00000099579"/>
<dbReference type="GlyCosmos" id="Q80V53">
    <property type="glycosylation" value="2 sites, No reported glycans"/>
</dbReference>
<dbReference type="GlyGen" id="Q80V53">
    <property type="glycosylation" value="2 sites"/>
</dbReference>
<dbReference type="PhosphoSitePlus" id="Q80V53"/>
<dbReference type="PaxDb" id="10090-ENSMUSP00000099579"/>
<dbReference type="PeptideAtlas" id="Q80V53"/>
<dbReference type="ProteomicsDB" id="279076"/>
<dbReference type="Pumba" id="Q80V53"/>
<dbReference type="Antibodypedia" id="23111">
    <property type="antibodies" value="97 antibodies from 23 providers"/>
</dbReference>
<dbReference type="DNASU" id="72136"/>
<dbReference type="Ensembl" id="ENSMUST00000099546.6">
    <property type="protein sequence ID" value="ENSMUSP00000099579.4"/>
    <property type="gene ID" value="ENSMUSG00000074916.6"/>
</dbReference>
<dbReference type="GeneID" id="72136"/>
<dbReference type="KEGG" id="mmu:72136"/>
<dbReference type="UCSC" id="uc012cbn.1">
    <property type="organism name" value="mouse"/>
</dbReference>
<dbReference type="AGR" id="MGI:1919386"/>
<dbReference type="CTD" id="113189"/>
<dbReference type="MGI" id="MGI:1919386">
    <property type="gene designation" value="Chst14"/>
</dbReference>
<dbReference type="VEuPathDB" id="HostDB:ENSMUSG00000074916"/>
<dbReference type="eggNOG" id="KOG4651">
    <property type="taxonomic scope" value="Eukaryota"/>
</dbReference>
<dbReference type="GeneTree" id="ENSGT00940000162640"/>
<dbReference type="HOGENOM" id="CLU_043398_1_3_1"/>
<dbReference type="InParanoid" id="Q80V53"/>
<dbReference type="OMA" id="SQKNMPH"/>
<dbReference type="OrthoDB" id="2019940at2759"/>
<dbReference type="PhylomeDB" id="Q80V53"/>
<dbReference type="TreeFam" id="TF325581"/>
<dbReference type="BRENDA" id="2.8.2.35">
    <property type="organism ID" value="3474"/>
</dbReference>
<dbReference type="Reactome" id="R-MMU-2022923">
    <property type="pathway name" value="Dermatan sulfate biosynthesis"/>
</dbReference>
<dbReference type="BioGRID-ORCS" id="72136">
    <property type="hits" value="3 hits in 77 CRISPR screens"/>
</dbReference>
<dbReference type="ChiTaRS" id="Chst14">
    <property type="organism name" value="mouse"/>
</dbReference>
<dbReference type="PRO" id="PR:Q80V53"/>
<dbReference type="Proteomes" id="UP000000589">
    <property type="component" value="Chromosome 2"/>
</dbReference>
<dbReference type="RNAct" id="Q80V53">
    <property type="molecule type" value="protein"/>
</dbReference>
<dbReference type="Bgee" id="ENSMUSG00000074916">
    <property type="expression patterns" value="Expressed in humerus cartilage element and 180 other cell types or tissues"/>
</dbReference>
<dbReference type="ExpressionAtlas" id="Q80V53">
    <property type="expression patterns" value="baseline and differential"/>
</dbReference>
<dbReference type="GO" id="GO:0000139">
    <property type="term" value="C:Golgi membrane"/>
    <property type="evidence" value="ECO:0007669"/>
    <property type="project" value="UniProtKB-SubCell"/>
</dbReference>
<dbReference type="GO" id="GO:0001537">
    <property type="term" value="F:dermatan 4-sulfotransferase activity"/>
    <property type="evidence" value="ECO:0000250"/>
    <property type="project" value="UniProtKB"/>
</dbReference>
<dbReference type="GO" id="GO:0016051">
    <property type="term" value="P:carbohydrate biosynthetic process"/>
    <property type="evidence" value="ECO:0007669"/>
    <property type="project" value="InterPro"/>
</dbReference>
<dbReference type="GO" id="GO:0050651">
    <property type="term" value="P:dermatan sulfate proteoglycan biosynthetic process"/>
    <property type="evidence" value="ECO:0000266"/>
    <property type="project" value="MGI"/>
</dbReference>
<dbReference type="GO" id="GO:0050655">
    <property type="term" value="P:dermatan sulfate proteoglycan metabolic process"/>
    <property type="evidence" value="ECO:0000250"/>
    <property type="project" value="UniProtKB"/>
</dbReference>
<dbReference type="InterPro" id="IPR018011">
    <property type="entry name" value="Carb_sulfotrans_8-10"/>
</dbReference>
<dbReference type="InterPro" id="IPR005331">
    <property type="entry name" value="Sulfotransferase"/>
</dbReference>
<dbReference type="PANTHER" id="PTHR12137">
    <property type="entry name" value="CARBOHYDRATE SULFOTRANSFERASE"/>
    <property type="match status" value="1"/>
</dbReference>
<dbReference type="PANTHER" id="PTHR12137:SF66">
    <property type="entry name" value="CARBOHYDRATE SULFOTRANSFERASE 14"/>
    <property type="match status" value="1"/>
</dbReference>
<dbReference type="Pfam" id="PF03567">
    <property type="entry name" value="Sulfotransfer_2"/>
    <property type="match status" value="1"/>
</dbReference>
<gene>
    <name type="primary">Chst14</name>
    <name type="synonym">D4st1</name>
</gene>
<protein>
    <recommendedName>
        <fullName>Carbohydrate sulfotransferase 14</fullName>
        <ecNumber>2.8.2.35</ecNumber>
    </recommendedName>
    <alternativeName>
        <fullName>Dermatan 4-sulfotransferase 1</fullName>
        <shortName>D4ST-1</shortName>
    </alternativeName>
</protein>
<sequence length="376" mass="43145">MFPRPLTPLAAPKSAETLGRTPRRAPLGRARAGLGGPPLLLPSMLMFAVIVASSGLLLMIERGILSEMKPLPLHPPSHKGAAWSGTDPKPRGLSLDAGDSDLQVREDIRNRTLRAVCGQPGMPRDPWDLPVGQRRTLLRHILVSDRYRFLYCYVPKVACSNWKRVLKVLAGILNNVDVRLKMDHRSDLVFLADLRPEEIRYRLQHYFKFLFVRDPLERLLSAYRNKFGEIREYQQRYGAEIVRRYRAGAGPSPAGDDVTFPEFLRYLVDEDPEHMNEHWMPVYHLCQPCAVHYDFVGSYERLEADANQVLEWVRAPPHVRFPARQAWYRPASPESLHYHLCNVPRALLQDVLPKYILDFSLFAYPLPNVTKEACHQ</sequence>
<reference key="1">
    <citation type="journal article" date="2006" name="J. Biol. Chem.">
        <title>Chondroitin sulfate/dermatan sulfate hybrid chains in the development of cerebellum. Spatiotemporal regulation of the expression of critical disulfated disaccharides by specific sulfotransferases.</title>
        <authorList>
            <person name="Mitsunaga C."/>
            <person name="Mikami T."/>
            <person name="Mizumoto S."/>
            <person name="Fukuda J."/>
            <person name="Sugahara K."/>
        </authorList>
    </citation>
    <scope>NUCLEOTIDE SEQUENCE [MRNA]</scope>
    <scope>DEVELOPMENTAL STAGE</scope>
    <scope>FUNCTION</scope>
    <scope>ENZYME ACTIVITY</scope>
    <source>
        <tissue>Heart</tissue>
    </source>
</reference>
<reference key="2">
    <citation type="journal article" date="2005" name="Science">
        <title>The transcriptional landscape of the mammalian genome.</title>
        <authorList>
            <person name="Carninci P."/>
            <person name="Kasukawa T."/>
            <person name="Katayama S."/>
            <person name="Gough J."/>
            <person name="Frith M.C."/>
            <person name="Maeda N."/>
            <person name="Oyama R."/>
            <person name="Ravasi T."/>
            <person name="Lenhard B."/>
            <person name="Wells C."/>
            <person name="Kodzius R."/>
            <person name="Shimokawa K."/>
            <person name="Bajic V.B."/>
            <person name="Brenner S.E."/>
            <person name="Batalov S."/>
            <person name="Forrest A.R."/>
            <person name="Zavolan M."/>
            <person name="Davis M.J."/>
            <person name="Wilming L.G."/>
            <person name="Aidinis V."/>
            <person name="Allen J.E."/>
            <person name="Ambesi-Impiombato A."/>
            <person name="Apweiler R."/>
            <person name="Aturaliya R.N."/>
            <person name="Bailey T.L."/>
            <person name="Bansal M."/>
            <person name="Baxter L."/>
            <person name="Beisel K.W."/>
            <person name="Bersano T."/>
            <person name="Bono H."/>
            <person name="Chalk A.M."/>
            <person name="Chiu K.P."/>
            <person name="Choudhary V."/>
            <person name="Christoffels A."/>
            <person name="Clutterbuck D.R."/>
            <person name="Crowe M.L."/>
            <person name="Dalla E."/>
            <person name="Dalrymple B.P."/>
            <person name="de Bono B."/>
            <person name="Della Gatta G."/>
            <person name="di Bernardo D."/>
            <person name="Down T."/>
            <person name="Engstrom P."/>
            <person name="Fagiolini M."/>
            <person name="Faulkner G."/>
            <person name="Fletcher C.F."/>
            <person name="Fukushima T."/>
            <person name="Furuno M."/>
            <person name="Futaki S."/>
            <person name="Gariboldi M."/>
            <person name="Georgii-Hemming P."/>
            <person name="Gingeras T.R."/>
            <person name="Gojobori T."/>
            <person name="Green R.E."/>
            <person name="Gustincich S."/>
            <person name="Harbers M."/>
            <person name="Hayashi Y."/>
            <person name="Hensch T.K."/>
            <person name="Hirokawa N."/>
            <person name="Hill D."/>
            <person name="Huminiecki L."/>
            <person name="Iacono M."/>
            <person name="Ikeo K."/>
            <person name="Iwama A."/>
            <person name="Ishikawa T."/>
            <person name="Jakt M."/>
            <person name="Kanapin A."/>
            <person name="Katoh M."/>
            <person name="Kawasawa Y."/>
            <person name="Kelso J."/>
            <person name="Kitamura H."/>
            <person name="Kitano H."/>
            <person name="Kollias G."/>
            <person name="Krishnan S.P."/>
            <person name="Kruger A."/>
            <person name="Kummerfeld S.K."/>
            <person name="Kurochkin I.V."/>
            <person name="Lareau L.F."/>
            <person name="Lazarevic D."/>
            <person name="Lipovich L."/>
            <person name="Liu J."/>
            <person name="Liuni S."/>
            <person name="McWilliam S."/>
            <person name="Madan Babu M."/>
            <person name="Madera M."/>
            <person name="Marchionni L."/>
            <person name="Matsuda H."/>
            <person name="Matsuzawa S."/>
            <person name="Miki H."/>
            <person name="Mignone F."/>
            <person name="Miyake S."/>
            <person name="Morris K."/>
            <person name="Mottagui-Tabar S."/>
            <person name="Mulder N."/>
            <person name="Nakano N."/>
            <person name="Nakauchi H."/>
            <person name="Ng P."/>
            <person name="Nilsson R."/>
            <person name="Nishiguchi S."/>
            <person name="Nishikawa S."/>
            <person name="Nori F."/>
            <person name="Ohara O."/>
            <person name="Okazaki Y."/>
            <person name="Orlando V."/>
            <person name="Pang K.C."/>
            <person name="Pavan W.J."/>
            <person name="Pavesi G."/>
            <person name="Pesole G."/>
            <person name="Petrovsky N."/>
            <person name="Piazza S."/>
            <person name="Reed J."/>
            <person name="Reid J.F."/>
            <person name="Ring B.Z."/>
            <person name="Ringwald M."/>
            <person name="Rost B."/>
            <person name="Ruan Y."/>
            <person name="Salzberg S.L."/>
            <person name="Sandelin A."/>
            <person name="Schneider C."/>
            <person name="Schoenbach C."/>
            <person name="Sekiguchi K."/>
            <person name="Semple C.A."/>
            <person name="Seno S."/>
            <person name="Sessa L."/>
            <person name="Sheng Y."/>
            <person name="Shibata Y."/>
            <person name="Shimada H."/>
            <person name="Shimada K."/>
            <person name="Silva D."/>
            <person name="Sinclair B."/>
            <person name="Sperling S."/>
            <person name="Stupka E."/>
            <person name="Sugiura K."/>
            <person name="Sultana R."/>
            <person name="Takenaka Y."/>
            <person name="Taki K."/>
            <person name="Tammoja K."/>
            <person name="Tan S.L."/>
            <person name="Tang S."/>
            <person name="Taylor M.S."/>
            <person name="Tegner J."/>
            <person name="Teichmann S.A."/>
            <person name="Ueda H.R."/>
            <person name="van Nimwegen E."/>
            <person name="Verardo R."/>
            <person name="Wei C.L."/>
            <person name="Yagi K."/>
            <person name="Yamanishi H."/>
            <person name="Zabarovsky E."/>
            <person name="Zhu S."/>
            <person name="Zimmer A."/>
            <person name="Hide W."/>
            <person name="Bult C."/>
            <person name="Grimmond S.M."/>
            <person name="Teasdale R.D."/>
            <person name="Liu E.T."/>
            <person name="Brusic V."/>
            <person name="Quackenbush J."/>
            <person name="Wahlestedt C."/>
            <person name="Mattick J.S."/>
            <person name="Hume D.A."/>
            <person name="Kai C."/>
            <person name="Sasaki D."/>
            <person name="Tomaru Y."/>
            <person name="Fukuda S."/>
            <person name="Kanamori-Katayama M."/>
            <person name="Suzuki M."/>
            <person name="Aoki J."/>
            <person name="Arakawa T."/>
            <person name="Iida J."/>
            <person name="Imamura K."/>
            <person name="Itoh M."/>
            <person name="Kato T."/>
            <person name="Kawaji H."/>
            <person name="Kawagashira N."/>
            <person name="Kawashima T."/>
            <person name="Kojima M."/>
            <person name="Kondo S."/>
            <person name="Konno H."/>
            <person name="Nakano K."/>
            <person name="Ninomiya N."/>
            <person name="Nishio T."/>
            <person name="Okada M."/>
            <person name="Plessy C."/>
            <person name="Shibata K."/>
            <person name="Shiraki T."/>
            <person name="Suzuki S."/>
            <person name="Tagami M."/>
            <person name="Waki K."/>
            <person name="Watahiki A."/>
            <person name="Okamura-Oho Y."/>
            <person name="Suzuki H."/>
            <person name="Kawai J."/>
            <person name="Hayashizaki Y."/>
        </authorList>
    </citation>
    <scope>NUCLEOTIDE SEQUENCE [LARGE SCALE MRNA]</scope>
    <source>
        <strain>C57BL/6J</strain>
        <strain>NOD</strain>
    </source>
</reference>
<reference key="3">
    <citation type="journal article" date="2009" name="PLoS Biol.">
        <title>Lineage-specific biology revealed by a finished genome assembly of the mouse.</title>
        <authorList>
            <person name="Church D.M."/>
            <person name="Goodstadt L."/>
            <person name="Hillier L.W."/>
            <person name="Zody M.C."/>
            <person name="Goldstein S."/>
            <person name="She X."/>
            <person name="Bult C.J."/>
            <person name="Agarwala R."/>
            <person name="Cherry J.L."/>
            <person name="DiCuccio M."/>
            <person name="Hlavina W."/>
            <person name="Kapustin Y."/>
            <person name="Meric P."/>
            <person name="Maglott D."/>
            <person name="Birtle Z."/>
            <person name="Marques A.C."/>
            <person name="Graves T."/>
            <person name="Zhou S."/>
            <person name="Teague B."/>
            <person name="Potamousis K."/>
            <person name="Churas C."/>
            <person name="Place M."/>
            <person name="Herschleb J."/>
            <person name="Runnheim R."/>
            <person name="Forrest D."/>
            <person name="Amos-Landgraf J."/>
            <person name="Schwartz D.C."/>
            <person name="Cheng Z."/>
            <person name="Lindblad-Toh K."/>
            <person name="Eichler E.E."/>
            <person name="Ponting C.P."/>
        </authorList>
    </citation>
    <scope>NUCLEOTIDE SEQUENCE [LARGE SCALE GENOMIC DNA]</scope>
    <source>
        <strain>C57BL/6J</strain>
    </source>
</reference>
<reference key="4">
    <citation type="journal article" date="2004" name="Genome Res.">
        <title>The status, quality, and expansion of the NIH full-length cDNA project: the Mammalian Gene Collection (MGC).</title>
        <authorList>
            <consortium name="The MGC Project Team"/>
        </authorList>
    </citation>
    <scope>NUCLEOTIDE SEQUENCE [LARGE SCALE MRNA]</scope>
    <source>
        <strain>C57BL/6J</strain>
        <strain>FVB/N</strain>
        <tissue>Brain</tissue>
        <tissue>Mammary gland</tissue>
    </source>
</reference>
<name>CHSTE_MOUSE</name>